<reference evidence="5" key="1">
    <citation type="journal article" date="2012" name="Syst. Biol.">
        <title>Peptidomics-based phylogeny and biogeography of Mantophasmatodea (Hexapoda).</title>
        <authorList>
            <person name="Predel R."/>
            <person name="Neupert S."/>
            <person name="Huetteroth W."/>
            <person name="Kahnt J."/>
            <person name="Waidelich D."/>
            <person name="Roth S."/>
        </authorList>
    </citation>
    <scope>PROTEIN SEQUENCE</scope>
    <scope>AMIDATION AT LEU-8</scope>
    <source>
        <tissue evidence="3">Corpora cardiaca</tissue>
    </source>
</reference>
<proteinExistence type="evidence at protein level"/>
<dbReference type="GO" id="GO:0005576">
    <property type="term" value="C:extracellular region"/>
    <property type="evidence" value="ECO:0007669"/>
    <property type="project" value="UniProtKB-SubCell"/>
</dbReference>
<dbReference type="GO" id="GO:0007218">
    <property type="term" value="P:neuropeptide signaling pathway"/>
    <property type="evidence" value="ECO:0007669"/>
    <property type="project" value="UniProtKB-KW"/>
</dbReference>
<dbReference type="PROSITE" id="PS00539">
    <property type="entry name" value="PYROKININ"/>
    <property type="match status" value="1"/>
</dbReference>
<comment type="function">
    <text evidence="1">Myoactive.</text>
</comment>
<comment type="subcellular location">
    <subcellularLocation>
        <location evidence="6">Secreted</location>
    </subcellularLocation>
</comment>
<comment type="similarity">
    <text evidence="2">Belongs to the pyrokinin family.</text>
</comment>
<evidence type="ECO:0000250" key="1">
    <source>
        <dbReference type="UniProtKB" id="P82619"/>
    </source>
</evidence>
<evidence type="ECO:0000255" key="2"/>
<evidence type="ECO:0000269" key="3">
    <source>
    </source>
</evidence>
<evidence type="ECO:0000303" key="4">
    <source>
    </source>
</evidence>
<evidence type="ECO:0000305" key="5"/>
<evidence type="ECO:0000305" key="6">
    <source>
    </source>
</evidence>
<name>PPK3_AUSGA</name>
<sequence>DPPFSPRL</sequence>
<organism>
    <name type="scientific">Austrophasma gansbaaiense</name>
    <name type="common">Gladiator</name>
    <name type="synonym">Heel-walker</name>
    <dbReference type="NCBI Taxonomy" id="253136"/>
    <lineage>
        <taxon>Eukaryota</taxon>
        <taxon>Metazoa</taxon>
        <taxon>Ecdysozoa</taxon>
        <taxon>Arthropoda</taxon>
        <taxon>Hexapoda</taxon>
        <taxon>Insecta</taxon>
        <taxon>Pterygota</taxon>
        <taxon>Neoptera</taxon>
        <taxon>Polyneoptera</taxon>
        <taxon>Mantophasmatodea</taxon>
        <taxon>Austrophasmatidae</taxon>
        <taxon>Austrophasma</taxon>
    </lineage>
</organism>
<accession>B3A0F1</accession>
<protein>
    <recommendedName>
        <fullName evidence="4">Pyrokinin-3</fullName>
        <shortName evidence="4">PK-3</shortName>
    </recommendedName>
    <alternativeName>
        <fullName evidence="1">FXPRL-amide</fullName>
    </alternativeName>
</protein>
<feature type="peptide" id="PRO_0000421592" description="Pyrokinin-3" evidence="3">
    <location>
        <begin position="1"/>
        <end position="8"/>
    </location>
</feature>
<feature type="modified residue" description="Leucine amide" evidence="3">
    <location>
        <position position="8"/>
    </location>
</feature>
<keyword id="KW-0027">Amidation</keyword>
<keyword id="KW-0903">Direct protein sequencing</keyword>
<keyword id="KW-0527">Neuropeptide</keyword>
<keyword id="KW-0964">Secreted</keyword>